<comment type="catalytic activity">
    <reaction evidence="1">
        <text>tRNA(Cys) + L-cysteine + ATP = L-cysteinyl-tRNA(Cys) + AMP + diphosphate</text>
        <dbReference type="Rhea" id="RHEA:17773"/>
        <dbReference type="Rhea" id="RHEA-COMP:9661"/>
        <dbReference type="Rhea" id="RHEA-COMP:9679"/>
        <dbReference type="ChEBI" id="CHEBI:30616"/>
        <dbReference type="ChEBI" id="CHEBI:33019"/>
        <dbReference type="ChEBI" id="CHEBI:35235"/>
        <dbReference type="ChEBI" id="CHEBI:78442"/>
        <dbReference type="ChEBI" id="CHEBI:78517"/>
        <dbReference type="ChEBI" id="CHEBI:456215"/>
        <dbReference type="EC" id="6.1.1.16"/>
    </reaction>
</comment>
<comment type="cofactor">
    <cofactor evidence="1">
        <name>Zn(2+)</name>
        <dbReference type="ChEBI" id="CHEBI:29105"/>
    </cofactor>
    <text evidence="1">Binds 1 zinc ion per subunit.</text>
</comment>
<comment type="subunit">
    <text evidence="1">Monomer.</text>
</comment>
<comment type="subcellular location">
    <subcellularLocation>
        <location evidence="1">Cytoplasm</location>
    </subcellularLocation>
</comment>
<comment type="similarity">
    <text evidence="1">Belongs to the class-I aminoacyl-tRNA synthetase family.</text>
</comment>
<keyword id="KW-0030">Aminoacyl-tRNA synthetase</keyword>
<keyword id="KW-0067">ATP-binding</keyword>
<keyword id="KW-0963">Cytoplasm</keyword>
<keyword id="KW-0436">Ligase</keyword>
<keyword id="KW-0479">Metal-binding</keyword>
<keyword id="KW-0547">Nucleotide-binding</keyword>
<keyword id="KW-0648">Protein biosynthesis</keyword>
<keyword id="KW-1185">Reference proteome</keyword>
<keyword id="KW-0862">Zinc</keyword>
<reference key="1">
    <citation type="journal article" date="2006" name="Nat. Genet.">
        <title>The multidrug-resistant human pathogen Clostridium difficile has a highly mobile, mosaic genome.</title>
        <authorList>
            <person name="Sebaihia M."/>
            <person name="Wren B.W."/>
            <person name="Mullany P."/>
            <person name="Fairweather N.F."/>
            <person name="Minton N."/>
            <person name="Stabler R."/>
            <person name="Thomson N.R."/>
            <person name="Roberts A.P."/>
            <person name="Cerdeno-Tarraga A.M."/>
            <person name="Wang H."/>
            <person name="Holden M.T.G."/>
            <person name="Wright A."/>
            <person name="Churcher C."/>
            <person name="Quail M.A."/>
            <person name="Baker S."/>
            <person name="Bason N."/>
            <person name="Brooks K."/>
            <person name="Chillingworth T."/>
            <person name="Cronin A."/>
            <person name="Davis P."/>
            <person name="Dowd L."/>
            <person name="Fraser A."/>
            <person name="Feltwell T."/>
            <person name="Hance Z."/>
            <person name="Holroyd S."/>
            <person name="Jagels K."/>
            <person name="Moule S."/>
            <person name="Mungall K."/>
            <person name="Price C."/>
            <person name="Rabbinowitsch E."/>
            <person name="Sharp S."/>
            <person name="Simmonds M."/>
            <person name="Stevens K."/>
            <person name="Unwin L."/>
            <person name="Whithead S."/>
            <person name="Dupuy B."/>
            <person name="Dougan G."/>
            <person name="Barrell B."/>
            <person name="Parkhill J."/>
        </authorList>
    </citation>
    <scope>NUCLEOTIDE SEQUENCE [LARGE SCALE GENOMIC DNA]</scope>
    <source>
        <strain>630</strain>
    </source>
</reference>
<proteinExistence type="inferred from homology"/>
<feature type="chain" id="PRO_1000006582" description="Cysteine--tRNA ligase">
    <location>
        <begin position="1"/>
        <end position="465"/>
    </location>
</feature>
<feature type="short sequence motif" description="'HIGH' region">
    <location>
        <begin position="29"/>
        <end position="39"/>
    </location>
</feature>
<feature type="short sequence motif" description="'KMSKS' region">
    <location>
        <begin position="264"/>
        <end position="268"/>
    </location>
</feature>
<feature type="binding site" evidence="1">
    <location>
        <position position="27"/>
    </location>
    <ligand>
        <name>Zn(2+)</name>
        <dbReference type="ChEBI" id="CHEBI:29105"/>
    </ligand>
</feature>
<feature type="binding site" evidence="1">
    <location>
        <position position="207"/>
    </location>
    <ligand>
        <name>Zn(2+)</name>
        <dbReference type="ChEBI" id="CHEBI:29105"/>
    </ligand>
</feature>
<feature type="binding site" evidence="1">
    <location>
        <position position="232"/>
    </location>
    <ligand>
        <name>Zn(2+)</name>
        <dbReference type="ChEBI" id="CHEBI:29105"/>
    </ligand>
</feature>
<feature type="binding site" evidence="1">
    <location>
        <position position="236"/>
    </location>
    <ligand>
        <name>Zn(2+)</name>
        <dbReference type="ChEBI" id="CHEBI:29105"/>
    </ligand>
</feature>
<feature type="binding site" evidence="1">
    <location>
        <position position="267"/>
    </location>
    <ligand>
        <name>ATP</name>
        <dbReference type="ChEBI" id="CHEBI:30616"/>
    </ligand>
</feature>
<sequence>MKVYNTLTRTKEEFVPLEEGKVKMYVCGPTVYNYIHIGNARPFIIFDTLRRYLEYRGYDVTYVQNFTDVDDKIINRSHEEGISPEEVAAKYIKEYFVDCDGLGIKRATVHPQVTDNIQQIIEFIKELEDKGYAYAVNGDVYFDTNKFEGYGKLSGQKQEDLEAGARIEVNDQKRHPMDFVLWKAKKEGEPGWDSPWGEGRPGWHIECSVMSKRYLGETIDIHAGGQDLTFPHHENEIAQSEARSGKTFSKYWMHNGYININDEKMSKSKGNFFTVRDISKLYDLEIVRFFMLSAHYRNPVNFSDEMLNQAKAGLERLYNTKEKLEFTLSNLVESPLTEKEVELVKELDDFRQKFIDAMDDDVNTADAVSVIFELAKLINSNVDENSSLEFAKKCLDEFNELTGVLNIVNKKKDTVLDKDIEELIQKRTDAKKNKEFQLADDIRQQLLDMGIVLEDTRQGVKWKRI</sequence>
<evidence type="ECO:0000255" key="1">
    <source>
        <dbReference type="HAMAP-Rule" id="MF_00041"/>
    </source>
</evidence>
<protein>
    <recommendedName>
        <fullName evidence="1">Cysteine--tRNA ligase</fullName>
        <ecNumber evidence="1">6.1.1.16</ecNumber>
    </recommendedName>
    <alternativeName>
        <fullName evidence="1">Cysteinyl-tRNA synthetase</fullName>
        <shortName evidence="1">CysRS</shortName>
    </alternativeName>
</protein>
<dbReference type="EC" id="6.1.1.16" evidence="1"/>
<dbReference type="EMBL" id="AM180355">
    <property type="protein sequence ID" value="CAJ66866.2"/>
    <property type="molecule type" value="Genomic_DNA"/>
</dbReference>
<dbReference type="RefSeq" id="WP_009895184.1">
    <property type="nucleotide sequence ID" value="NZ_JAUPES010000031.1"/>
</dbReference>
<dbReference type="RefSeq" id="YP_001086515.2">
    <property type="nucleotide sequence ID" value="NC_009089.1"/>
</dbReference>
<dbReference type="SMR" id="Q18CD5"/>
<dbReference type="STRING" id="272563.CD630_00520"/>
<dbReference type="EnsemblBacteria" id="CAJ66866">
    <property type="protein sequence ID" value="CAJ66866"/>
    <property type="gene ID" value="CD630_00520"/>
</dbReference>
<dbReference type="GeneID" id="66352549"/>
<dbReference type="KEGG" id="cdf:CD630_00520"/>
<dbReference type="KEGG" id="pdc:CDIF630_00116"/>
<dbReference type="PATRIC" id="fig|272563.120.peg.57"/>
<dbReference type="eggNOG" id="COG0215">
    <property type="taxonomic scope" value="Bacteria"/>
</dbReference>
<dbReference type="OrthoDB" id="9815130at2"/>
<dbReference type="PhylomeDB" id="Q18CD5"/>
<dbReference type="BioCyc" id="PDIF272563:G12WB-105-MONOMER"/>
<dbReference type="Proteomes" id="UP000001978">
    <property type="component" value="Chromosome"/>
</dbReference>
<dbReference type="GO" id="GO:0005829">
    <property type="term" value="C:cytosol"/>
    <property type="evidence" value="ECO:0007669"/>
    <property type="project" value="TreeGrafter"/>
</dbReference>
<dbReference type="GO" id="GO:0005524">
    <property type="term" value="F:ATP binding"/>
    <property type="evidence" value="ECO:0007669"/>
    <property type="project" value="UniProtKB-UniRule"/>
</dbReference>
<dbReference type="GO" id="GO:0004817">
    <property type="term" value="F:cysteine-tRNA ligase activity"/>
    <property type="evidence" value="ECO:0007669"/>
    <property type="project" value="UniProtKB-UniRule"/>
</dbReference>
<dbReference type="GO" id="GO:0008270">
    <property type="term" value="F:zinc ion binding"/>
    <property type="evidence" value="ECO:0007669"/>
    <property type="project" value="UniProtKB-UniRule"/>
</dbReference>
<dbReference type="GO" id="GO:0006423">
    <property type="term" value="P:cysteinyl-tRNA aminoacylation"/>
    <property type="evidence" value="ECO:0007669"/>
    <property type="project" value="UniProtKB-UniRule"/>
</dbReference>
<dbReference type="CDD" id="cd00672">
    <property type="entry name" value="CysRS_core"/>
    <property type="match status" value="1"/>
</dbReference>
<dbReference type="FunFam" id="3.40.50.620:FF:000009">
    <property type="entry name" value="Cysteine--tRNA ligase"/>
    <property type="match status" value="1"/>
</dbReference>
<dbReference type="Gene3D" id="1.20.120.1910">
    <property type="entry name" value="Cysteine-tRNA ligase, C-terminal anti-codon recognition domain"/>
    <property type="match status" value="1"/>
</dbReference>
<dbReference type="Gene3D" id="3.40.50.620">
    <property type="entry name" value="HUPs"/>
    <property type="match status" value="1"/>
</dbReference>
<dbReference type="HAMAP" id="MF_00041">
    <property type="entry name" value="Cys_tRNA_synth"/>
    <property type="match status" value="1"/>
</dbReference>
<dbReference type="InterPro" id="IPR015803">
    <property type="entry name" value="Cys-tRNA-ligase"/>
</dbReference>
<dbReference type="InterPro" id="IPR015273">
    <property type="entry name" value="Cys-tRNA-synt_Ia_DALR"/>
</dbReference>
<dbReference type="InterPro" id="IPR024909">
    <property type="entry name" value="Cys-tRNA/MSH_ligase"/>
</dbReference>
<dbReference type="InterPro" id="IPR056411">
    <property type="entry name" value="CysS_C"/>
</dbReference>
<dbReference type="InterPro" id="IPR014729">
    <property type="entry name" value="Rossmann-like_a/b/a_fold"/>
</dbReference>
<dbReference type="InterPro" id="IPR032678">
    <property type="entry name" value="tRNA-synt_1_cat_dom"/>
</dbReference>
<dbReference type="InterPro" id="IPR009080">
    <property type="entry name" value="tRNAsynth_Ia_anticodon-bd"/>
</dbReference>
<dbReference type="NCBIfam" id="TIGR00435">
    <property type="entry name" value="cysS"/>
    <property type="match status" value="1"/>
</dbReference>
<dbReference type="PANTHER" id="PTHR10890:SF3">
    <property type="entry name" value="CYSTEINE--TRNA LIGASE, CYTOPLASMIC"/>
    <property type="match status" value="1"/>
</dbReference>
<dbReference type="PANTHER" id="PTHR10890">
    <property type="entry name" value="CYSTEINYL-TRNA SYNTHETASE"/>
    <property type="match status" value="1"/>
</dbReference>
<dbReference type="Pfam" id="PF23493">
    <property type="entry name" value="CysS_C"/>
    <property type="match status" value="1"/>
</dbReference>
<dbReference type="Pfam" id="PF09190">
    <property type="entry name" value="DALR_2"/>
    <property type="match status" value="1"/>
</dbReference>
<dbReference type="Pfam" id="PF01406">
    <property type="entry name" value="tRNA-synt_1e"/>
    <property type="match status" value="1"/>
</dbReference>
<dbReference type="PRINTS" id="PR00983">
    <property type="entry name" value="TRNASYNTHCYS"/>
</dbReference>
<dbReference type="SMART" id="SM00840">
    <property type="entry name" value="DALR_2"/>
    <property type="match status" value="1"/>
</dbReference>
<dbReference type="SUPFAM" id="SSF47323">
    <property type="entry name" value="Anticodon-binding domain of a subclass of class I aminoacyl-tRNA synthetases"/>
    <property type="match status" value="1"/>
</dbReference>
<dbReference type="SUPFAM" id="SSF52374">
    <property type="entry name" value="Nucleotidylyl transferase"/>
    <property type="match status" value="1"/>
</dbReference>
<accession>Q18CD5</accession>
<name>SYC_CLOD6</name>
<organism>
    <name type="scientific">Clostridioides difficile (strain 630)</name>
    <name type="common">Peptoclostridium difficile</name>
    <dbReference type="NCBI Taxonomy" id="272563"/>
    <lineage>
        <taxon>Bacteria</taxon>
        <taxon>Bacillati</taxon>
        <taxon>Bacillota</taxon>
        <taxon>Clostridia</taxon>
        <taxon>Peptostreptococcales</taxon>
        <taxon>Peptostreptococcaceae</taxon>
        <taxon>Clostridioides</taxon>
    </lineage>
</organism>
<gene>
    <name evidence="1" type="primary">cysS</name>
    <name type="ordered locus">CD630_00520</name>
</gene>